<feature type="chain" id="PRO_0000313215" description="DNA ligase">
    <location>
        <begin position="1"/>
        <end position="700"/>
    </location>
</feature>
<feature type="domain" description="BRCT" evidence="1">
    <location>
        <begin position="598"/>
        <end position="686"/>
    </location>
</feature>
<feature type="active site" description="N6-AMP-lysine intermediate" evidence="1">
    <location>
        <position position="128"/>
    </location>
</feature>
<feature type="binding site" evidence="1">
    <location>
        <begin position="42"/>
        <end position="46"/>
    </location>
    <ligand>
        <name>NAD(+)</name>
        <dbReference type="ChEBI" id="CHEBI:57540"/>
    </ligand>
</feature>
<feature type="binding site" evidence="1">
    <location>
        <begin position="91"/>
        <end position="92"/>
    </location>
    <ligand>
        <name>NAD(+)</name>
        <dbReference type="ChEBI" id="CHEBI:57540"/>
    </ligand>
</feature>
<feature type="binding site" evidence="1">
    <location>
        <position position="126"/>
    </location>
    <ligand>
        <name>NAD(+)</name>
        <dbReference type="ChEBI" id="CHEBI:57540"/>
    </ligand>
</feature>
<feature type="binding site" evidence="1">
    <location>
        <position position="149"/>
    </location>
    <ligand>
        <name>NAD(+)</name>
        <dbReference type="ChEBI" id="CHEBI:57540"/>
    </ligand>
</feature>
<feature type="binding site" evidence="1">
    <location>
        <position position="184"/>
    </location>
    <ligand>
        <name>NAD(+)</name>
        <dbReference type="ChEBI" id="CHEBI:57540"/>
    </ligand>
</feature>
<feature type="binding site" evidence="1">
    <location>
        <position position="300"/>
    </location>
    <ligand>
        <name>NAD(+)</name>
        <dbReference type="ChEBI" id="CHEBI:57540"/>
    </ligand>
</feature>
<feature type="binding site" evidence="1">
    <location>
        <position position="324"/>
    </location>
    <ligand>
        <name>NAD(+)</name>
        <dbReference type="ChEBI" id="CHEBI:57540"/>
    </ligand>
</feature>
<feature type="binding site" evidence="1">
    <location>
        <position position="418"/>
    </location>
    <ligand>
        <name>Zn(2+)</name>
        <dbReference type="ChEBI" id="CHEBI:29105"/>
    </ligand>
</feature>
<feature type="binding site" evidence="1">
    <location>
        <position position="421"/>
    </location>
    <ligand>
        <name>Zn(2+)</name>
        <dbReference type="ChEBI" id="CHEBI:29105"/>
    </ligand>
</feature>
<feature type="binding site" evidence="1">
    <location>
        <position position="436"/>
    </location>
    <ligand>
        <name>Zn(2+)</name>
        <dbReference type="ChEBI" id="CHEBI:29105"/>
    </ligand>
</feature>
<feature type="binding site" evidence="1">
    <location>
        <position position="441"/>
    </location>
    <ligand>
        <name>Zn(2+)</name>
        <dbReference type="ChEBI" id="CHEBI:29105"/>
    </ligand>
</feature>
<feature type="strand" evidence="3">
    <location>
        <begin position="82"/>
        <end position="84"/>
    </location>
</feature>
<feature type="strand" evidence="3">
    <location>
        <begin position="93"/>
        <end position="95"/>
    </location>
</feature>
<feature type="helix" evidence="3">
    <location>
        <begin position="98"/>
        <end position="111"/>
    </location>
</feature>
<feature type="strand" evidence="3">
    <location>
        <begin position="122"/>
        <end position="139"/>
    </location>
</feature>
<feature type="strand" evidence="3">
    <location>
        <begin position="142"/>
        <end position="148"/>
    </location>
</feature>
<feature type="strand" evidence="3">
    <location>
        <begin position="152"/>
        <end position="157"/>
    </location>
</feature>
<feature type="helix" evidence="3">
    <location>
        <begin position="159"/>
        <end position="162"/>
    </location>
</feature>
<feature type="strand" evidence="3">
    <location>
        <begin position="177"/>
        <end position="186"/>
    </location>
</feature>
<feature type="helix" evidence="3">
    <location>
        <begin position="189"/>
        <end position="200"/>
    </location>
</feature>
<feature type="helix" evidence="3">
    <location>
        <begin position="210"/>
        <end position="218"/>
    </location>
</feature>
<feature type="helix" evidence="3">
    <location>
        <begin position="223"/>
        <end position="227"/>
    </location>
</feature>
<feature type="turn" evidence="3">
    <location>
        <begin position="228"/>
        <end position="230"/>
    </location>
</feature>
<feature type="strand" evidence="3">
    <location>
        <begin position="232"/>
        <end position="241"/>
    </location>
</feature>
<feature type="helix" evidence="3">
    <location>
        <begin position="249"/>
        <end position="258"/>
    </location>
</feature>
<feature type="strand" evidence="3">
    <location>
        <begin position="268"/>
        <end position="272"/>
    </location>
</feature>
<feature type="helix" evidence="3">
    <location>
        <begin position="273"/>
        <end position="284"/>
    </location>
</feature>
<feature type="strand" evidence="3">
    <location>
        <begin position="287"/>
        <end position="292"/>
    </location>
</feature>
<feature type="strand" evidence="3">
    <location>
        <begin position="294"/>
        <end position="303"/>
    </location>
</feature>
<feature type="helix" evidence="3">
    <location>
        <begin position="304"/>
        <end position="310"/>
    </location>
</feature>
<feature type="strand" evidence="3">
    <location>
        <begin position="314"/>
        <end position="323"/>
    </location>
</feature>
<feature type="strand" evidence="3">
    <location>
        <begin position="330"/>
        <end position="341"/>
    </location>
</feature>
<feature type="strand" evidence="3">
    <location>
        <begin position="347"/>
        <end position="358"/>
    </location>
</feature>
<feature type="strand" evidence="3">
    <location>
        <begin position="361"/>
        <end position="367"/>
    </location>
</feature>
<feature type="helix" evidence="3">
    <location>
        <begin position="371"/>
        <end position="377"/>
    </location>
</feature>
<feature type="strand" evidence="3">
    <location>
        <begin position="384"/>
        <end position="390"/>
    </location>
</feature>
<feature type="turn" evidence="3">
    <location>
        <begin position="391"/>
        <end position="393"/>
    </location>
</feature>
<feature type="strand" evidence="3">
    <location>
        <begin position="394"/>
        <end position="400"/>
    </location>
</feature>
<feature type="helix" evidence="3">
    <location>
        <begin position="402"/>
        <end position="404"/>
    </location>
</feature>
<feature type="turn" evidence="3">
    <location>
        <begin position="419"/>
        <end position="421"/>
    </location>
</feature>
<feature type="helix" evidence="3">
    <location>
        <begin position="442"/>
        <end position="453"/>
    </location>
</feature>
<feature type="turn" evidence="3">
    <location>
        <begin position="455"/>
        <end position="458"/>
    </location>
</feature>
<feature type="helix" evidence="3">
    <location>
        <begin position="465"/>
        <end position="473"/>
    </location>
</feature>
<feature type="helix" evidence="3">
    <location>
        <begin position="481"/>
        <end position="484"/>
    </location>
</feature>
<feature type="helix" evidence="3">
    <location>
        <begin position="488"/>
        <end position="492"/>
    </location>
</feature>
<feature type="helix" evidence="3">
    <location>
        <begin position="495"/>
        <end position="497"/>
    </location>
</feature>
<feature type="helix" evidence="3">
    <location>
        <begin position="500"/>
        <end position="513"/>
    </location>
</feature>
<feature type="helix" evidence="3">
    <location>
        <begin position="518"/>
        <end position="524"/>
    </location>
</feature>
<feature type="helix" evidence="3">
    <location>
        <begin position="531"/>
        <end position="541"/>
    </location>
</feature>
<feature type="helix" evidence="3">
    <location>
        <begin position="544"/>
        <end position="548"/>
    </location>
</feature>
<feature type="helix" evidence="3">
    <location>
        <begin position="552"/>
        <end position="556"/>
    </location>
</feature>
<feature type="helix" evidence="3">
    <location>
        <begin position="565"/>
        <end position="573"/>
    </location>
</feature>
<feature type="helix" evidence="3">
    <location>
        <begin position="576"/>
        <end position="588"/>
    </location>
</feature>
<protein>
    <recommendedName>
        <fullName evidence="1">DNA ligase</fullName>
        <ecNumber evidence="1">6.5.1.2</ecNumber>
    </recommendedName>
    <alternativeName>
        <fullName evidence="1">Polydeoxyribonucleotide synthase [NAD(+)]</fullName>
    </alternativeName>
</protein>
<dbReference type="EC" id="6.5.1.2" evidence="1"/>
<dbReference type="EMBL" id="AE000513">
    <property type="protein sequence ID" value="AAF11619.1"/>
    <property type="molecule type" value="Genomic_DNA"/>
</dbReference>
<dbReference type="PIR" id="G75318">
    <property type="entry name" value="G75318"/>
</dbReference>
<dbReference type="RefSeq" id="NP_295792.1">
    <property type="nucleotide sequence ID" value="NC_001263.1"/>
</dbReference>
<dbReference type="PDB" id="8AK4">
    <property type="method" value="X-ray"/>
    <property type="resolution" value="3.36 A"/>
    <property type="chains" value="A=1-600"/>
</dbReference>
<dbReference type="PDBsum" id="8AK4"/>
<dbReference type="SMR" id="Q9RSQ5"/>
<dbReference type="FunCoup" id="Q9RSQ5">
    <property type="interactions" value="292"/>
</dbReference>
<dbReference type="STRING" id="243230.DR_2069"/>
<dbReference type="PaxDb" id="243230-DR_2069"/>
<dbReference type="EnsemblBacteria" id="AAF11619">
    <property type="protein sequence ID" value="AAF11619"/>
    <property type="gene ID" value="DR_2069"/>
</dbReference>
<dbReference type="KEGG" id="dra:DR_2069"/>
<dbReference type="PATRIC" id="fig|243230.17.peg.2294"/>
<dbReference type="eggNOG" id="COG0272">
    <property type="taxonomic scope" value="Bacteria"/>
</dbReference>
<dbReference type="HOGENOM" id="CLU_007764_2_1_0"/>
<dbReference type="InParanoid" id="Q9RSQ5"/>
<dbReference type="OrthoDB" id="9759736at2"/>
<dbReference type="Proteomes" id="UP000002524">
    <property type="component" value="Chromosome 1"/>
</dbReference>
<dbReference type="GO" id="GO:0005829">
    <property type="term" value="C:cytosol"/>
    <property type="evidence" value="ECO:0000318"/>
    <property type="project" value="GO_Central"/>
</dbReference>
<dbReference type="GO" id="GO:0003911">
    <property type="term" value="F:DNA ligase (NAD+) activity"/>
    <property type="evidence" value="ECO:0000318"/>
    <property type="project" value="GO_Central"/>
</dbReference>
<dbReference type="GO" id="GO:0046872">
    <property type="term" value="F:metal ion binding"/>
    <property type="evidence" value="ECO:0007669"/>
    <property type="project" value="UniProtKB-KW"/>
</dbReference>
<dbReference type="GO" id="GO:0006281">
    <property type="term" value="P:DNA repair"/>
    <property type="evidence" value="ECO:0007669"/>
    <property type="project" value="UniProtKB-KW"/>
</dbReference>
<dbReference type="GO" id="GO:0006260">
    <property type="term" value="P:DNA replication"/>
    <property type="evidence" value="ECO:0007669"/>
    <property type="project" value="UniProtKB-KW"/>
</dbReference>
<dbReference type="CDD" id="cd17748">
    <property type="entry name" value="BRCT_DNA_ligase_like"/>
    <property type="match status" value="1"/>
</dbReference>
<dbReference type="CDD" id="cd00114">
    <property type="entry name" value="LIGANc"/>
    <property type="match status" value="1"/>
</dbReference>
<dbReference type="FunFam" id="1.10.150.20:FF:000006">
    <property type="entry name" value="DNA ligase"/>
    <property type="match status" value="1"/>
</dbReference>
<dbReference type="FunFam" id="1.10.150.20:FF:000007">
    <property type="entry name" value="DNA ligase"/>
    <property type="match status" value="1"/>
</dbReference>
<dbReference type="Gene3D" id="6.20.10.30">
    <property type="match status" value="1"/>
</dbReference>
<dbReference type="Gene3D" id="1.10.150.20">
    <property type="entry name" value="5' to 3' exonuclease, C-terminal subdomain"/>
    <property type="match status" value="2"/>
</dbReference>
<dbReference type="Gene3D" id="3.40.50.10190">
    <property type="entry name" value="BRCT domain"/>
    <property type="match status" value="1"/>
</dbReference>
<dbReference type="Gene3D" id="3.30.470.30">
    <property type="entry name" value="DNA ligase/mRNA capping enzyme"/>
    <property type="match status" value="1"/>
</dbReference>
<dbReference type="Gene3D" id="1.10.287.610">
    <property type="entry name" value="Helix hairpin bin"/>
    <property type="match status" value="1"/>
</dbReference>
<dbReference type="Gene3D" id="2.40.50.140">
    <property type="entry name" value="Nucleic acid-binding proteins"/>
    <property type="match status" value="1"/>
</dbReference>
<dbReference type="HAMAP" id="MF_01588">
    <property type="entry name" value="DNA_ligase_A"/>
    <property type="match status" value="1"/>
</dbReference>
<dbReference type="InterPro" id="IPR001357">
    <property type="entry name" value="BRCT_dom"/>
</dbReference>
<dbReference type="InterPro" id="IPR036420">
    <property type="entry name" value="BRCT_dom_sf"/>
</dbReference>
<dbReference type="InterPro" id="IPR041663">
    <property type="entry name" value="DisA/LigA_HHH"/>
</dbReference>
<dbReference type="InterPro" id="IPR001679">
    <property type="entry name" value="DNA_ligase"/>
</dbReference>
<dbReference type="InterPro" id="IPR013839">
    <property type="entry name" value="DNAligase_adenylation"/>
</dbReference>
<dbReference type="InterPro" id="IPR013840">
    <property type="entry name" value="DNAligase_N"/>
</dbReference>
<dbReference type="InterPro" id="IPR012340">
    <property type="entry name" value="NA-bd_OB-fold"/>
</dbReference>
<dbReference type="InterPro" id="IPR004150">
    <property type="entry name" value="NAD_DNA_ligase_OB"/>
</dbReference>
<dbReference type="InterPro" id="IPR010994">
    <property type="entry name" value="RuvA_2-like"/>
</dbReference>
<dbReference type="InterPro" id="IPR004149">
    <property type="entry name" value="Znf_DNAligase_C4"/>
</dbReference>
<dbReference type="NCBIfam" id="TIGR00575">
    <property type="entry name" value="dnlj"/>
    <property type="match status" value="1"/>
</dbReference>
<dbReference type="NCBIfam" id="NF005932">
    <property type="entry name" value="PRK07956.1"/>
    <property type="match status" value="1"/>
</dbReference>
<dbReference type="PANTHER" id="PTHR23389">
    <property type="entry name" value="CHROMOSOME TRANSMISSION FIDELITY FACTOR 18"/>
    <property type="match status" value="1"/>
</dbReference>
<dbReference type="PANTHER" id="PTHR23389:SF9">
    <property type="entry name" value="DNA LIGASE"/>
    <property type="match status" value="1"/>
</dbReference>
<dbReference type="Pfam" id="PF00533">
    <property type="entry name" value="BRCT"/>
    <property type="match status" value="1"/>
</dbReference>
<dbReference type="Pfam" id="PF01653">
    <property type="entry name" value="DNA_ligase_aden"/>
    <property type="match status" value="1"/>
</dbReference>
<dbReference type="Pfam" id="PF03120">
    <property type="entry name" value="DNA_ligase_OB"/>
    <property type="match status" value="1"/>
</dbReference>
<dbReference type="Pfam" id="PF03119">
    <property type="entry name" value="DNA_ligase_ZBD"/>
    <property type="match status" value="1"/>
</dbReference>
<dbReference type="Pfam" id="PF12826">
    <property type="entry name" value="HHH_2"/>
    <property type="match status" value="1"/>
</dbReference>
<dbReference type="Pfam" id="PF14520">
    <property type="entry name" value="HHH_5"/>
    <property type="match status" value="1"/>
</dbReference>
<dbReference type="Pfam" id="PF22745">
    <property type="entry name" value="Nlig-Ia"/>
    <property type="match status" value="1"/>
</dbReference>
<dbReference type="PIRSF" id="PIRSF001604">
    <property type="entry name" value="LigA"/>
    <property type="match status" value="1"/>
</dbReference>
<dbReference type="SMART" id="SM00292">
    <property type="entry name" value="BRCT"/>
    <property type="match status" value="1"/>
</dbReference>
<dbReference type="SMART" id="SM00532">
    <property type="entry name" value="LIGANc"/>
    <property type="match status" value="1"/>
</dbReference>
<dbReference type="SUPFAM" id="SSF52113">
    <property type="entry name" value="BRCT domain"/>
    <property type="match status" value="1"/>
</dbReference>
<dbReference type="SUPFAM" id="SSF56091">
    <property type="entry name" value="DNA ligase/mRNA capping enzyme, catalytic domain"/>
    <property type="match status" value="1"/>
</dbReference>
<dbReference type="SUPFAM" id="SSF50249">
    <property type="entry name" value="Nucleic acid-binding proteins"/>
    <property type="match status" value="1"/>
</dbReference>
<dbReference type="SUPFAM" id="SSF47781">
    <property type="entry name" value="RuvA domain 2-like"/>
    <property type="match status" value="1"/>
</dbReference>
<dbReference type="PROSITE" id="PS50172">
    <property type="entry name" value="BRCT"/>
    <property type="match status" value="1"/>
</dbReference>
<evidence type="ECO:0000255" key="1">
    <source>
        <dbReference type="HAMAP-Rule" id="MF_01588"/>
    </source>
</evidence>
<evidence type="ECO:0000269" key="2">
    <source>
    </source>
</evidence>
<evidence type="ECO:0007829" key="3">
    <source>
        <dbReference type="PDB" id="8AK4"/>
    </source>
</evidence>
<reference key="1">
    <citation type="journal article" date="1999" name="Science">
        <title>Genome sequence of the radioresistant bacterium Deinococcus radiodurans R1.</title>
        <authorList>
            <person name="White O."/>
            <person name="Eisen J.A."/>
            <person name="Heidelberg J.F."/>
            <person name="Hickey E.K."/>
            <person name="Peterson J.D."/>
            <person name="Dodson R.J."/>
            <person name="Haft D.H."/>
            <person name="Gwinn M.L."/>
            <person name="Nelson W.C."/>
            <person name="Richardson D.L."/>
            <person name="Moffat K.S."/>
            <person name="Qin H."/>
            <person name="Jiang L."/>
            <person name="Pamphile W."/>
            <person name="Crosby M."/>
            <person name="Shen M."/>
            <person name="Vamathevan J.J."/>
            <person name="Lam P."/>
            <person name="McDonald L.A."/>
            <person name="Utterback T.R."/>
            <person name="Zalewski C."/>
            <person name="Makarova K.S."/>
            <person name="Aravind L."/>
            <person name="Daly M.J."/>
            <person name="Minton K.W."/>
            <person name="Fleischmann R.D."/>
            <person name="Ketchum K.A."/>
            <person name="Nelson K.E."/>
            <person name="Salzberg S.L."/>
            <person name="Smith H.O."/>
            <person name="Venter J.C."/>
            <person name="Fraser C.M."/>
        </authorList>
    </citation>
    <scope>NUCLEOTIDE SEQUENCE [LARGE SCALE GENOMIC DNA]</scope>
    <source>
        <strain>ATCC 13939 / DSM 20539 / JCM 16871 / CCUG 27074 / LMG 4051 / NBRC 15346 / NCIMB 9279 / VKM B-1422 / R1</strain>
    </source>
</reference>
<reference key="2">
    <citation type="journal article" date="2007" name="BMC Mol. Biol.">
        <title>Enzymes involved in DNA ligation and end-healing in the radioresistant bacterium Deinococcus radiodurans.</title>
        <authorList>
            <person name="Blasius M."/>
            <person name="Buob R."/>
            <person name="Shevelev I.V."/>
            <person name="Hubscher U."/>
        </authorList>
    </citation>
    <scope>FUNCTION</scope>
    <scope>COFACTOR</scope>
</reference>
<name>DNLJ_DEIRA</name>
<accession>Q9RSQ5</accession>
<organism>
    <name type="scientific">Deinococcus radiodurans (strain ATCC 13939 / DSM 20539 / JCM 16871 / CCUG 27074 / LMG 4051 / NBRC 15346 / NCIMB 9279 / VKM B-1422 / R1)</name>
    <dbReference type="NCBI Taxonomy" id="243230"/>
    <lineage>
        <taxon>Bacteria</taxon>
        <taxon>Thermotogati</taxon>
        <taxon>Deinococcota</taxon>
        <taxon>Deinococci</taxon>
        <taxon>Deinococcales</taxon>
        <taxon>Deinococcaceae</taxon>
        <taxon>Deinococcus</taxon>
    </lineage>
</organism>
<sequence>MRYPGRMTDAPPDPRARYLALRDEVALHNRAYYEQDAPTIPDDEYDRLARELRELEAAHPEFADDHSPVQTVGGAPSSAFEPVTHPTQMTSLDNVFDDDELRDWQEKLARSLGLPLDTDDFTFTGELKIDGLSVNLYYLDGELQWAATRGNGRVGEIVTAQVLTIPDIPQKLEGLKGELEVRGEVYLSRADFAAFNAQAEELGTPLLKNPRNGAAGALRQKDPEVTRTRHLKAILYAVGKRDGVPARTQWEVLEWLSAQGFPTSRSSEHLRGIAAAADYHARMIRAHADFEFDADGTVLKLDSLSQQEEAGFTSRAPRWAIAYKFPVEEVETVLESITVNVGRTGKLAPLAHLSPRLIEGSTVSKATLHNEDYIRDMDLRVGDTVLVRKSGGVIPQIMRVLPDKRPADAAPFEFPTHCPVCGHEAVRAEGDANTYCPNPACPAQSFERIRYFVSRGAMDVRGIGEKLVTQLLHEGLIHDAAGLYTLSAEQLAGLERGGEKKAGNILGQLEASKTKPLWRLINALGMSHVGQRNAQALARAFGTLEGLLAATPEQIEAVPGLGGIIAQSVTASLADPAMRDLIARLQASGVAPQAEEVTRTDQLSGLNFVLTGALSRPREVIKAELEAAGGRVTGSVTKKTSYLVAGEDAGSKLARAGELGVPVLDEAGLAALLAERGLGERGVAEDGMSGAETEAAPAES</sequence>
<comment type="function">
    <text evidence="1 2">DNA ligase that catalyzes the formation of phosphodiester linkages between 5'-phosphoryl and 3'-hydroxyl groups in double-stranded DNA using NAD as a coenzyme and as the energy source for the reaction. It is essential for DNA replication and repair of damaged DNA.</text>
</comment>
<comment type="catalytic activity">
    <reaction evidence="1">
        <text>NAD(+) + (deoxyribonucleotide)n-3'-hydroxyl + 5'-phospho-(deoxyribonucleotide)m = (deoxyribonucleotide)n+m + AMP + beta-nicotinamide D-nucleotide.</text>
        <dbReference type="EC" id="6.5.1.2"/>
    </reaction>
</comment>
<comment type="cofactor">
    <cofactor evidence="2">
        <name>Mn(2+)</name>
        <dbReference type="ChEBI" id="CHEBI:29035"/>
    </cofactor>
</comment>
<comment type="similarity">
    <text evidence="1">Belongs to the NAD-dependent DNA ligase family. LigA subfamily.</text>
</comment>
<gene>
    <name evidence="1" type="primary">ligA</name>
    <name type="ordered locus">DR_2069</name>
</gene>
<proteinExistence type="evidence at protein level"/>
<keyword id="KW-0002">3D-structure</keyword>
<keyword id="KW-0227">DNA damage</keyword>
<keyword id="KW-0234">DNA repair</keyword>
<keyword id="KW-0235">DNA replication</keyword>
<keyword id="KW-0436">Ligase</keyword>
<keyword id="KW-0464">Manganese</keyword>
<keyword id="KW-0479">Metal-binding</keyword>
<keyword id="KW-0520">NAD</keyword>
<keyword id="KW-1185">Reference proteome</keyword>
<keyword id="KW-0862">Zinc</keyword>